<keyword id="KW-0066">ATP synthesis</keyword>
<keyword id="KW-1003">Cell membrane</keyword>
<keyword id="KW-0138">CF(0)</keyword>
<keyword id="KW-0375">Hydrogen ion transport</keyword>
<keyword id="KW-0406">Ion transport</keyword>
<keyword id="KW-0472">Membrane</keyword>
<keyword id="KW-0812">Transmembrane</keyword>
<keyword id="KW-1133">Transmembrane helix</keyword>
<keyword id="KW-0813">Transport</keyword>
<dbReference type="EMBL" id="AE009949">
    <property type="protein sequence ID" value="AAL97478.1"/>
    <property type="molecule type" value="Genomic_DNA"/>
</dbReference>
<dbReference type="RefSeq" id="WP_002985242.1">
    <property type="nucleotide sequence ID" value="NC_003485.1"/>
</dbReference>
<dbReference type="SMR" id="Q8P1K8"/>
<dbReference type="KEGG" id="spm:spyM18_0814"/>
<dbReference type="HOGENOM" id="CLU_079215_4_2_9"/>
<dbReference type="GO" id="GO:0005886">
    <property type="term" value="C:plasma membrane"/>
    <property type="evidence" value="ECO:0007669"/>
    <property type="project" value="UniProtKB-SubCell"/>
</dbReference>
<dbReference type="GO" id="GO:0045259">
    <property type="term" value="C:proton-transporting ATP synthase complex"/>
    <property type="evidence" value="ECO:0007669"/>
    <property type="project" value="UniProtKB-KW"/>
</dbReference>
<dbReference type="GO" id="GO:0046933">
    <property type="term" value="F:proton-transporting ATP synthase activity, rotational mechanism"/>
    <property type="evidence" value="ECO:0007669"/>
    <property type="project" value="UniProtKB-UniRule"/>
</dbReference>
<dbReference type="GO" id="GO:0046961">
    <property type="term" value="F:proton-transporting ATPase activity, rotational mechanism"/>
    <property type="evidence" value="ECO:0007669"/>
    <property type="project" value="TreeGrafter"/>
</dbReference>
<dbReference type="CDD" id="cd06503">
    <property type="entry name" value="ATP-synt_Fo_b"/>
    <property type="match status" value="1"/>
</dbReference>
<dbReference type="HAMAP" id="MF_01398">
    <property type="entry name" value="ATP_synth_b_bprime"/>
    <property type="match status" value="1"/>
</dbReference>
<dbReference type="InterPro" id="IPR028987">
    <property type="entry name" value="ATP_synth_B-like_membr_sf"/>
</dbReference>
<dbReference type="InterPro" id="IPR002146">
    <property type="entry name" value="ATP_synth_b/b'su_bac/chlpt"/>
</dbReference>
<dbReference type="InterPro" id="IPR005864">
    <property type="entry name" value="ATP_synth_F0_bsu_bac"/>
</dbReference>
<dbReference type="InterPro" id="IPR050059">
    <property type="entry name" value="ATP_synthase_B_chain"/>
</dbReference>
<dbReference type="NCBIfam" id="TIGR01144">
    <property type="entry name" value="ATP_synt_b"/>
    <property type="match status" value="1"/>
</dbReference>
<dbReference type="PANTHER" id="PTHR33445:SF1">
    <property type="entry name" value="ATP SYNTHASE SUBUNIT B"/>
    <property type="match status" value="1"/>
</dbReference>
<dbReference type="PANTHER" id="PTHR33445">
    <property type="entry name" value="ATP SYNTHASE SUBUNIT B', CHLOROPLASTIC"/>
    <property type="match status" value="1"/>
</dbReference>
<dbReference type="Pfam" id="PF00430">
    <property type="entry name" value="ATP-synt_B"/>
    <property type="match status" value="1"/>
</dbReference>
<dbReference type="SUPFAM" id="SSF81573">
    <property type="entry name" value="F1F0 ATP synthase subunit B, membrane domain"/>
    <property type="match status" value="1"/>
</dbReference>
<organism>
    <name type="scientific">Streptococcus pyogenes serotype M18 (strain MGAS8232)</name>
    <dbReference type="NCBI Taxonomy" id="186103"/>
    <lineage>
        <taxon>Bacteria</taxon>
        <taxon>Bacillati</taxon>
        <taxon>Bacillota</taxon>
        <taxon>Bacilli</taxon>
        <taxon>Lactobacillales</taxon>
        <taxon>Streptococcaceae</taxon>
        <taxon>Streptococcus</taxon>
    </lineage>
</organism>
<reference key="1">
    <citation type="journal article" date="2002" name="Proc. Natl. Acad. Sci. U.S.A.">
        <title>Genome sequence and comparative microarray analysis of serotype M18 group A Streptococcus strains associated with acute rheumatic fever outbreaks.</title>
        <authorList>
            <person name="Smoot J.C."/>
            <person name="Barbian K.D."/>
            <person name="Van Gompel J.J."/>
            <person name="Smoot L.M."/>
            <person name="Chaussee M.S."/>
            <person name="Sylva G.L."/>
            <person name="Sturdevant D.E."/>
            <person name="Ricklefs S.M."/>
            <person name="Porcella S.F."/>
            <person name="Parkins L.D."/>
            <person name="Beres S.B."/>
            <person name="Campbell D.S."/>
            <person name="Smith T.M."/>
            <person name="Zhang Q."/>
            <person name="Kapur V."/>
            <person name="Daly J.A."/>
            <person name="Veasy L.G."/>
            <person name="Musser J.M."/>
        </authorList>
    </citation>
    <scope>NUCLEOTIDE SEQUENCE [LARGE SCALE GENOMIC DNA]</scope>
    <source>
        <strain>MGAS8232</strain>
    </source>
</reference>
<protein>
    <recommendedName>
        <fullName evidence="1">ATP synthase subunit b</fullName>
    </recommendedName>
    <alternativeName>
        <fullName evidence="1">ATP synthase F(0) sector subunit b</fullName>
    </alternativeName>
    <alternativeName>
        <fullName evidence="1">ATPase subunit I</fullName>
    </alternativeName>
    <alternativeName>
        <fullName evidence="1">F-type ATPase subunit b</fullName>
        <shortName evidence="1">F-ATPase subunit b</shortName>
    </alternativeName>
</protein>
<proteinExistence type="inferred from homology"/>
<gene>
    <name evidence="1" type="primary">atpF</name>
    <name type="ordered locus">spyM18_0814</name>
</gene>
<feature type="chain" id="PRO_0000368804" description="ATP synthase subunit b">
    <location>
        <begin position="1"/>
        <end position="164"/>
    </location>
</feature>
<feature type="transmembrane region" description="Helical" evidence="1">
    <location>
        <begin position="6"/>
        <end position="26"/>
    </location>
</feature>
<evidence type="ECO:0000255" key="1">
    <source>
        <dbReference type="HAMAP-Rule" id="MF_01398"/>
    </source>
</evidence>
<sequence length="164" mass="17812">MSITFGELVGNFILVTGSVIVLLLLIKKFAWGAIESILQTRSQQISRDIDQAEQSRLSAQQLETKSQANLDASRSQASKIISDAKEIGQLQGDKLVAEATDEAKRLKEKALTDIEQSKSDAISAVKTEMSDLTVLLAEKIMGANLDKTAQSQLIDSYLDDLGEA</sequence>
<comment type="function">
    <text evidence="1">F(1)F(0) ATP synthase produces ATP from ADP in the presence of a proton or sodium gradient. F-type ATPases consist of two structural domains, F(1) containing the extramembraneous catalytic core and F(0) containing the membrane proton channel, linked together by a central stalk and a peripheral stalk. During catalysis, ATP synthesis in the catalytic domain of F(1) is coupled via a rotary mechanism of the central stalk subunits to proton translocation.</text>
</comment>
<comment type="function">
    <text evidence="1">Component of the F(0) channel, it forms part of the peripheral stalk, linking F(1) to F(0).</text>
</comment>
<comment type="subunit">
    <text evidence="1">F-type ATPases have 2 components, F(1) - the catalytic core - and F(0) - the membrane proton channel. F(1) has five subunits: alpha(3), beta(3), gamma(1), delta(1), epsilon(1). F(0) has three main subunits: a(1), b(2) and c(10-14). The alpha and beta chains form an alternating ring which encloses part of the gamma chain. F(1) is attached to F(0) by a central stalk formed by the gamma and epsilon chains, while a peripheral stalk is formed by the delta and b chains.</text>
</comment>
<comment type="subcellular location">
    <subcellularLocation>
        <location evidence="1">Cell membrane</location>
        <topology evidence="1">Single-pass membrane protein</topology>
    </subcellularLocation>
</comment>
<comment type="similarity">
    <text evidence="1">Belongs to the ATPase B chain family.</text>
</comment>
<name>ATPF_STRP8</name>
<accession>Q8P1K8</accession>